<evidence type="ECO:0000255" key="1">
    <source>
        <dbReference type="HAMAP-Rule" id="MF_00036"/>
    </source>
</evidence>
<name>SYA_NEOSM</name>
<organism>
    <name type="scientific">Neorickettsia sennetsu (strain ATCC VR-367 / Miyayama)</name>
    <name type="common">Ehrlichia sennetsu</name>
    <dbReference type="NCBI Taxonomy" id="222891"/>
    <lineage>
        <taxon>Bacteria</taxon>
        <taxon>Pseudomonadati</taxon>
        <taxon>Pseudomonadota</taxon>
        <taxon>Alphaproteobacteria</taxon>
        <taxon>Rickettsiales</taxon>
        <taxon>Anaplasmataceae</taxon>
        <taxon>Neorickettsia</taxon>
    </lineage>
</organism>
<dbReference type="EC" id="6.1.1.7" evidence="1"/>
<dbReference type="EMBL" id="CP000237">
    <property type="protein sequence ID" value="ABD46083.1"/>
    <property type="molecule type" value="Genomic_DNA"/>
</dbReference>
<dbReference type="RefSeq" id="WP_011451560.1">
    <property type="nucleotide sequence ID" value="NC_007798.1"/>
</dbReference>
<dbReference type="SMR" id="Q2GEP2"/>
<dbReference type="STRING" id="222891.NSE_0156"/>
<dbReference type="KEGG" id="nse:NSE_0156"/>
<dbReference type="eggNOG" id="COG0013">
    <property type="taxonomic scope" value="Bacteria"/>
</dbReference>
<dbReference type="HOGENOM" id="CLU_004485_1_1_5"/>
<dbReference type="OrthoDB" id="9803884at2"/>
<dbReference type="Proteomes" id="UP000001942">
    <property type="component" value="Chromosome"/>
</dbReference>
<dbReference type="GO" id="GO:0005829">
    <property type="term" value="C:cytosol"/>
    <property type="evidence" value="ECO:0007669"/>
    <property type="project" value="TreeGrafter"/>
</dbReference>
<dbReference type="GO" id="GO:0004813">
    <property type="term" value="F:alanine-tRNA ligase activity"/>
    <property type="evidence" value="ECO:0007669"/>
    <property type="project" value="UniProtKB-UniRule"/>
</dbReference>
<dbReference type="GO" id="GO:0002161">
    <property type="term" value="F:aminoacyl-tRNA deacylase activity"/>
    <property type="evidence" value="ECO:0007669"/>
    <property type="project" value="TreeGrafter"/>
</dbReference>
<dbReference type="GO" id="GO:0005524">
    <property type="term" value="F:ATP binding"/>
    <property type="evidence" value="ECO:0007669"/>
    <property type="project" value="UniProtKB-UniRule"/>
</dbReference>
<dbReference type="GO" id="GO:0000049">
    <property type="term" value="F:tRNA binding"/>
    <property type="evidence" value="ECO:0007669"/>
    <property type="project" value="UniProtKB-KW"/>
</dbReference>
<dbReference type="GO" id="GO:0008270">
    <property type="term" value="F:zinc ion binding"/>
    <property type="evidence" value="ECO:0007669"/>
    <property type="project" value="UniProtKB-UniRule"/>
</dbReference>
<dbReference type="GO" id="GO:0006419">
    <property type="term" value="P:alanyl-tRNA aminoacylation"/>
    <property type="evidence" value="ECO:0007669"/>
    <property type="project" value="UniProtKB-UniRule"/>
</dbReference>
<dbReference type="GO" id="GO:0045892">
    <property type="term" value="P:negative regulation of DNA-templated transcription"/>
    <property type="evidence" value="ECO:0007669"/>
    <property type="project" value="TreeGrafter"/>
</dbReference>
<dbReference type="CDD" id="cd00673">
    <property type="entry name" value="AlaRS_core"/>
    <property type="match status" value="1"/>
</dbReference>
<dbReference type="FunFam" id="3.30.930.10:FF:000004">
    <property type="entry name" value="Alanine--tRNA ligase"/>
    <property type="match status" value="1"/>
</dbReference>
<dbReference type="FunFam" id="3.30.980.10:FF:000004">
    <property type="entry name" value="Alanine--tRNA ligase, cytoplasmic"/>
    <property type="match status" value="1"/>
</dbReference>
<dbReference type="Gene3D" id="2.40.30.130">
    <property type="match status" value="1"/>
</dbReference>
<dbReference type="Gene3D" id="3.30.54.20">
    <property type="match status" value="1"/>
</dbReference>
<dbReference type="Gene3D" id="3.30.930.10">
    <property type="entry name" value="Bira Bifunctional Protein, Domain 2"/>
    <property type="match status" value="1"/>
</dbReference>
<dbReference type="Gene3D" id="3.30.980.10">
    <property type="entry name" value="Threonyl-trna Synthetase, Chain A, domain 2"/>
    <property type="match status" value="1"/>
</dbReference>
<dbReference type="HAMAP" id="MF_00036_B">
    <property type="entry name" value="Ala_tRNA_synth_B"/>
    <property type="match status" value="1"/>
</dbReference>
<dbReference type="InterPro" id="IPR045864">
    <property type="entry name" value="aa-tRNA-synth_II/BPL/LPL"/>
</dbReference>
<dbReference type="InterPro" id="IPR002318">
    <property type="entry name" value="Ala-tRNA-lgiase_IIc"/>
</dbReference>
<dbReference type="InterPro" id="IPR018162">
    <property type="entry name" value="Ala-tRNA-ligase_IIc_anticod-bd"/>
</dbReference>
<dbReference type="InterPro" id="IPR018165">
    <property type="entry name" value="Ala-tRNA-synth_IIc_core"/>
</dbReference>
<dbReference type="InterPro" id="IPR018164">
    <property type="entry name" value="Ala-tRNA-synth_IIc_N"/>
</dbReference>
<dbReference type="InterPro" id="IPR050058">
    <property type="entry name" value="Ala-tRNA_ligase"/>
</dbReference>
<dbReference type="InterPro" id="IPR023033">
    <property type="entry name" value="Ala_tRNA_ligase_euk/bac"/>
</dbReference>
<dbReference type="InterPro" id="IPR018163">
    <property type="entry name" value="Thr/Ala-tRNA-synth_IIc_edit"/>
</dbReference>
<dbReference type="InterPro" id="IPR009000">
    <property type="entry name" value="Transl_B-barrel_sf"/>
</dbReference>
<dbReference type="InterPro" id="IPR012947">
    <property type="entry name" value="tRNA_SAD"/>
</dbReference>
<dbReference type="NCBIfam" id="TIGR00344">
    <property type="entry name" value="alaS"/>
    <property type="match status" value="1"/>
</dbReference>
<dbReference type="PANTHER" id="PTHR11777:SF9">
    <property type="entry name" value="ALANINE--TRNA LIGASE, CYTOPLASMIC"/>
    <property type="match status" value="1"/>
</dbReference>
<dbReference type="PANTHER" id="PTHR11777">
    <property type="entry name" value="ALANYL-TRNA SYNTHETASE"/>
    <property type="match status" value="1"/>
</dbReference>
<dbReference type="Pfam" id="PF01411">
    <property type="entry name" value="tRNA-synt_2c"/>
    <property type="match status" value="1"/>
</dbReference>
<dbReference type="Pfam" id="PF07973">
    <property type="entry name" value="tRNA_SAD"/>
    <property type="match status" value="1"/>
</dbReference>
<dbReference type="PRINTS" id="PR00980">
    <property type="entry name" value="TRNASYNTHALA"/>
</dbReference>
<dbReference type="SMART" id="SM00863">
    <property type="entry name" value="tRNA_SAD"/>
    <property type="match status" value="1"/>
</dbReference>
<dbReference type="SUPFAM" id="SSF55681">
    <property type="entry name" value="Class II aaRS and biotin synthetases"/>
    <property type="match status" value="1"/>
</dbReference>
<dbReference type="SUPFAM" id="SSF101353">
    <property type="entry name" value="Putative anticodon-binding domain of alanyl-tRNA synthetase (AlaRS)"/>
    <property type="match status" value="1"/>
</dbReference>
<dbReference type="SUPFAM" id="SSF55186">
    <property type="entry name" value="ThrRS/AlaRS common domain"/>
    <property type="match status" value="1"/>
</dbReference>
<dbReference type="SUPFAM" id="SSF50447">
    <property type="entry name" value="Translation proteins"/>
    <property type="match status" value="1"/>
</dbReference>
<dbReference type="PROSITE" id="PS50860">
    <property type="entry name" value="AA_TRNA_LIGASE_II_ALA"/>
    <property type="match status" value="1"/>
</dbReference>
<protein>
    <recommendedName>
        <fullName evidence="1">Alanine--tRNA ligase</fullName>
        <ecNumber evidence="1">6.1.1.7</ecNumber>
    </recommendedName>
    <alternativeName>
        <fullName evidence="1">Alanyl-tRNA synthetase</fullName>
        <shortName evidence="1">AlaRS</shortName>
    </alternativeName>
</protein>
<comment type="function">
    <text evidence="1">Catalyzes the attachment of alanine to tRNA(Ala) in a two-step reaction: alanine is first activated by ATP to form Ala-AMP and then transferred to the acceptor end of tRNA(Ala). Also edits incorrectly charged Ser-tRNA(Ala) and Gly-tRNA(Ala) via its editing domain.</text>
</comment>
<comment type="catalytic activity">
    <reaction evidence="1">
        <text>tRNA(Ala) + L-alanine + ATP = L-alanyl-tRNA(Ala) + AMP + diphosphate</text>
        <dbReference type="Rhea" id="RHEA:12540"/>
        <dbReference type="Rhea" id="RHEA-COMP:9657"/>
        <dbReference type="Rhea" id="RHEA-COMP:9923"/>
        <dbReference type="ChEBI" id="CHEBI:30616"/>
        <dbReference type="ChEBI" id="CHEBI:33019"/>
        <dbReference type="ChEBI" id="CHEBI:57972"/>
        <dbReference type="ChEBI" id="CHEBI:78442"/>
        <dbReference type="ChEBI" id="CHEBI:78497"/>
        <dbReference type="ChEBI" id="CHEBI:456215"/>
        <dbReference type="EC" id="6.1.1.7"/>
    </reaction>
</comment>
<comment type="cofactor">
    <cofactor evidence="1">
        <name>Zn(2+)</name>
        <dbReference type="ChEBI" id="CHEBI:29105"/>
    </cofactor>
    <text evidence="1">Binds 1 zinc ion per subunit.</text>
</comment>
<comment type="subcellular location">
    <subcellularLocation>
        <location evidence="1">Cytoplasm</location>
    </subcellularLocation>
</comment>
<comment type="domain">
    <text evidence="1">Consists of three domains; the N-terminal catalytic domain, the editing domain and the C-terminal C-Ala domain. The editing domain removes incorrectly charged amino acids, while the C-Ala domain, along with tRNA(Ala), serves as a bridge to cooperatively bring together the editing and aminoacylation centers thus stimulating deacylation of misacylated tRNAs.</text>
</comment>
<comment type="similarity">
    <text evidence="1">Belongs to the class-II aminoacyl-tRNA synthetase family.</text>
</comment>
<feature type="chain" id="PRO_0000347696" description="Alanine--tRNA ligase">
    <location>
        <begin position="1"/>
        <end position="848"/>
    </location>
</feature>
<feature type="binding site" evidence="1">
    <location>
        <position position="553"/>
    </location>
    <ligand>
        <name>Zn(2+)</name>
        <dbReference type="ChEBI" id="CHEBI:29105"/>
    </ligand>
</feature>
<feature type="binding site" evidence="1">
    <location>
        <position position="557"/>
    </location>
    <ligand>
        <name>Zn(2+)</name>
        <dbReference type="ChEBI" id="CHEBI:29105"/>
    </ligand>
</feature>
<feature type="binding site" evidence="1">
    <location>
        <position position="654"/>
    </location>
    <ligand>
        <name>Zn(2+)</name>
        <dbReference type="ChEBI" id="CHEBI:29105"/>
    </ligand>
</feature>
<feature type="binding site" evidence="1">
    <location>
        <position position="658"/>
    </location>
    <ligand>
        <name>Zn(2+)</name>
        <dbReference type="ChEBI" id="CHEBI:29105"/>
    </ligand>
</feature>
<proteinExistence type="inferred from homology"/>
<keyword id="KW-0030">Aminoacyl-tRNA synthetase</keyword>
<keyword id="KW-0067">ATP-binding</keyword>
<keyword id="KW-0963">Cytoplasm</keyword>
<keyword id="KW-0436">Ligase</keyword>
<keyword id="KW-0479">Metal-binding</keyword>
<keyword id="KW-0547">Nucleotide-binding</keyword>
<keyword id="KW-0648">Protein biosynthesis</keyword>
<keyword id="KW-0694">RNA-binding</keyword>
<keyword id="KW-0820">tRNA-binding</keyword>
<keyword id="KW-0862">Zinc</keyword>
<reference key="1">
    <citation type="journal article" date="2006" name="PLoS Genet.">
        <title>Comparative genomics of emerging human ehrlichiosis agents.</title>
        <authorList>
            <person name="Dunning Hotopp J.C."/>
            <person name="Lin M."/>
            <person name="Madupu R."/>
            <person name="Crabtree J."/>
            <person name="Angiuoli S.V."/>
            <person name="Eisen J.A."/>
            <person name="Seshadri R."/>
            <person name="Ren Q."/>
            <person name="Wu M."/>
            <person name="Utterback T.R."/>
            <person name="Smith S."/>
            <person name="Lewis M."/>
            <person name="Khouri H."/>
            <person name="Zhang C."/>
            <person name="Niu H."/>
            <person name="Lin Q."/>
            <person name="Ohashi N."/>
            <person name="Zhi N."/>
            <person name="Nelson W.C."/>
            <person name="Brinkac L.M."/>
            <person name="Dodson R.J."/>
            <person name="Rosovitz M.J."/>
            <person name="Sundaram J.P."/>
            <person name="Daugherty S.C."/>
            <person name="Davidsen T."/>
            <person name="Durkin A.S."/>
            <person name="Gwinn M.L."/>
            <person name="Haft D.H."/>
            <person name="Selengut J.D."/>
            <person name="Sullivan S.A."/>
            <person name="Zafar N."/>
            <person name="Zhou L."/>
            <person name="Benahmed F."/>
            <person name="Forberger H."/>
            <person name="Halpin R."/>
            <person name="Mulligan S."/>
            <person name="Robinson J."/>
            <person name="White O."/>
            <person name="Rikihisa Y."/>
            <person name="Tettelin H."/>
        </authorList>
    </citation>
    <scope>NUCLEOTIDE SEQUENCE [LARGE SCALE GENOMIC DNA]</scope>
    <source>
        <strain>ATCC VR-367 / Miyayama</strain>
    </source>
</reference>
<sequence>MIDGLRKKFIDFFVKNGHTYLPSASLVPKDDPSLMFVNAGMVPFKEYFVDVRRAPFSSIVTAQKCVRAGGKHNDLENVGFTKRHHTFFEMLGNFSFGCYFKERAIELAWKFVTEELTLSKKKLYITVYHEDDEAFEIWDKLTGFGERKIKRISTSDNFWQMGDIGPCGPCSEIFYDHGEHLSGDIPEDKKDPGERYVEIWNLVFMQYIREQSGELARMECPCIDTGMGLERVAAILEGTDDNYKTKLFEAIVKESQNVTGNKDNQAAHKVIADHLRSASFLIADGVLPGNTGREYVLRRIIRRAVRYSHALGFDTVLLPKLFWVLKEWMGSHYQELTRAENLILDTLTLEEQSFRNTLKSGMKLLEEVSSSMKEGDTLSGDIAFTLYDTHGFPLDITVDILKERKISVDEEGFAERMKMQRLLAQASRMKDMAQTSSYEVKAVFLEHGKTPFIGYENFTGLALILAITEKEGSNKLTIILDQTIFYPESGGQESDQGIIEGENTLLKVEKVYKSTEGVILHECTIIRGQVTSRGEKVNLKIDINRRNSLARNHSATHILHHVLRKRLGAHVSQRGSLVAPSRLRFDFSHSQSITEEELSKIEDCINLMIWDDHPVMTEIKKTDEAIRDGAIGLFGEKYDDTVRVVSIGEAVELCGGTHVKKSSAIGLVKILSASSVAHGVRRIEAVTHLTALQYIREAEQAQLYQLTEHQAKLKAMQKSHQKEITRVYQSIVTNAEARTERYGSVEIITKNVQGISKEILLSLASEIRPKTGVLIVHTELSEALYSLIILDKEIFKNISFIDSMKETIDKSHGKVTPSVPYVIQATFSKKEDLDRCLKNLSELVVSTF</sequence>
<gene>
    <name evidence="1" type="primary">alaS</name>
    <name type="ordered locus">NSE_0156</name>
</gene>
<accession>Q2GEP2</accession>